<gene>
    <name evidence="1" type="primary">cdhA1</name>
</gene>
<proteinExistence type="evidence at protein level"/>
<organism>
    <name type="scientific">Methanosarcina thermophila</name>
    <dbReference type="NCBI Taxonomy" id="2210"/>
    <lineage>
        <taxon>Archaea</taxon>
        <taxon>Methanobacteriati</taxon>
        <taxon>Methanobacteriota</taxon>
        <taxon>Stenosarchaea group</taxon>
        <taxon>Methanomicrobia</taxon>
        <taxon>Methanosarcinales</taxon>
        <taxon>Methanosarcinaceae</taxon>
        <taxon>Methanosarcina</taxon>
    </lineage>
</organism>
<dbReference type="EC" id="1.2.7.4" evidence="1"/>
<dbReference type="EMBL" id="U66032">
    <property type="protein sequence ID" value="AAC44650.1"/>
    <property type="molecule type" value="Genomic_DNA"/>
</dbReference>
<dbReference type="EMBL" id="L20952">
    <property type="protein sequence ID" value="AAA72034.1"/>
    <property type="molecule type" value="Genomic_DNA"/>
</dbReference>
<dbReference type="PIR" id="A48868">
    <property type="entry name" value="A48868"/>
</dbReference>
<dbReference type="SMR" id="Q08368"/>
<dbReference type="KEGG" id="ag:AAC44650"/>
<dbReference type="BioCyc" id="MetaCyc:CDHAMSARC-MONOMER"/>
<dbReference type="UniPathway" id="UPA00642"/>
<dbReference type="GO" id="GO:0051539">
    <property type="term" value="F:4 iron, 4 sulfur cluster binding"/>
    <property type="evidence" value="ECO:0007669"/>
    <property type="project" value="UniProtKB-KW"/>
</dbReference>
<dbReference type="GO" id="GO:0043885">
    <property type="term" value="F:anaerobic carbon-monoxide dehydrogenase activity"/>
    <property type="evidence" value="ECO:0000314"/>
    <property type="project" value="MENGO"/>
</dbReference>
<dbReference type="GO" id="GO:0050418">
    <property type="term" value="F:hydroxylamine reductase activity"/>
    <property type="evidence" value="ECO:0007669"/>
    <property type="project" value="TreeGrafter"/>
</dbReference>
<dbReference type="GO" id="GO:0005506">
    <property type="term" value="F:iron ion binding"/>
    <property type="evidence" value="ECO:0007669"/>
    <property type="project" value="UniProtKB-UniRule"/>
</dbReference>
<dbReference type="GO" id="GO:0016151">
    <property type="term" value="F:nickel cation binding"/>
    <property type="evidence" value="ECO:0007669"/>
    <property type="project" value="UniProtKB-UniRule"/>
</dbReference>
<dbReference type="GO" id="GO:0004601">
    <property type="term" value="F:peroxidase activity"/>
    <property type="evidence" value="ECO:0007669"/>
    <property type="project" value="TreeGrafter"/>
</dbReference>
<dbReference type="GO" id="GO:0006084">
    <property type="term" value="P:acetyl-CoA metabolic process"/>
    <property type="evidence" value="ECO:0007669"/>
    <property type="project" value="InterPro"/>
</dbReference>
<dbReference type="GO" id="GO:0019385">
    <property type="term" value="P:methanogenesis, from acetate"/>
    <property type="evidence" value="ECO:0007669"/>
    <property type="project" value="UniProtKB-UniRule"/>
</dbReference>
<dbReference type="GO" id="GO:0042542">
    <property type="term" value="P:response to hydrogen peroxide"/>
    <property type="evidence" value="ECO:0007669"/>
    <property type="project" value="TreeGrafter"/>
</dbReference>
<dbReference type="FunFam" id="1.10.8.190:FF:000001">
    <property type="entry name" value="Acetyl-CoA decarbonylase/synthase complex subunit alpha 1"/>
    <property type="match status" value="1"/>
</dbReference>
<dbReference type="FunFam" id="3.40.50.2030:FF:000004">
    <property type="entry name" value="Acetyl-CoA decarbonylase/synthase complex subunit alpha 1"/>
    <property type="match status" value="1"/>
</dbReference>
<dbReference type="FunFam" id="3.40.50.2030:FF:000006">
    <property type="entry name" value="Acetyl-CoA decarbonylase/synthase complex subunit alpha 1"/>
    <property type="match status" value="1"/>
</dbReference>
<dbReference type="FunFam" id="3.30.70.20:FF:000044">
    <property type="entry name" value="Ion-translocating oxidoreductase complex subunit C"/>
    <property type="match status" value="1"/>
</dbReference>
<dbReference type="Gene3D" id="3.30.70.20">
    <property type="match status" value="1"/>
</dbReference>
<dbReference type="Gene3D" id="3.40.50.2030">
    <property type="match status" value="2"/>
</dbReference>
<dbReference type="Gene3D" id="1.10.8.190">
    <property type="entry name" value="Carbon monoxide dehydrogenase alpha subunit. Chain M, domain 1"/>
    <property type="match status" value="1"/>
</dbReference>
<dbReference type="HAMAP" id="MF_01137">
    <property type="entry name" value="CdhA"/>
    <property type="match status" value="1"/>
</dbReference>
<dbReference type="InterPro" id="IPR017896">
    <property type="entry name" value="4Fe4S_Fe-S-bd"/>
</dbReference>
<dbReference type="InterPro" id="IPR017900">
    <property type="entry name" value="4Fe4S_Fe_S_CS"/>
</dbReference>
<dbReference type="InterPro" id="IPR004460">
    <property type="entry name" value="CdhA"/>
</dbReference>
<dbReference type="InterPro" id="IPR004137">
    <property type="entry name" value="HCP/CODH"/>
</dbReference>
<dbReference type="InterPro" id="IPR016099">
    <property type="entry name" value="Prismane-like_a/b-sand"/>
</dbReference>
<dbReference type="InterPro" id="IPR011254">
    <property type="entry name" value="Prismane-like_sf"/>
</dbReference>
<dbReference type="NCBIfam" id="TIGR00314">
    <property type="entry name" value="cdhA"/>
    <property type="match status" value="1"/>
</dbReference>
<dbReference type="PANTHER" id="PTHR30109:SF6">
    <property type="entry name" value="ACETYL-COA DECARBONYLASE_SYNTHASE COMPLEX SUBUNIT ALPHA"/>
    <property type="match status" value="1"/>
</dbReference>
<dbReference type="PANTHER" id="PTHR30109">
    <property type="entry name" value="HYDROXYLAMINE REDUCTASE"/>
    <property type="match status" value="1"/>
</dbReference>
<dbReference type="Pfam" id="PF03063">
    <property type="entry name" value="Prismane"/>
    <property type="match status" value="2"/>
</dbReference>
<dbReference type="SUPFAM" id="SSF46548">
    <property type="entry name" value="alpha-helical ferredoxin"/>
    <property type="match status" value="1"/>
</dbReference>
<dbReference type="SUPFAM" id="SSF56821">
    <property type="entry name" value="Prismane protein-like"/>
    <property type="match status" value="1"/>
</dbReference>
<dbReference type="PROSITE" id="PS00198">
    <property type="entry name" value="4FE4S_FER_1"/>
    <property type="match status" value="1"/>
</dbReference>
<dbReference type="PROSITE" id="PS51379">
    <property type="entry name" value="4FE4S_FER_2"/>
    <property type="match status" value="2"/>
</dbReference>
<evidence type="ECO:0000255" key="1">
    <source>
        <dbReference type="HAMAP-Rule" id="MF_01137"/>
    </source>
</evidence>
<evidence type="ECO:0000269" key="2">
    <source>
    </source>
</evidence>
<evidence type="ECO:0000269" key="3">
    <source>
    </source>
</evidence>
<accession>Q08368</accession>
<accession>P72019</accession>
<name>ACDA1_METTE</name>
<feature type="initiator methionine" description="Removed" evidence="2 3">
    <location>
        <position position="1"/>
    </location>
</feature>
<feature type="chain" id="PRO_0000155083" description="Acetyl-CoA decarbonylase/synthase complex subunit alpha 1">
    <location>
        <begin position="2"/>
        <end position="806"/>
    </location>
</feature>
<feature type="domain" description="4Fe-4S ferredoxin-type 1" evidence="1">
    <location>
        <begin position="407"/>
        <end position="436"/>
    </location>
</feature>
<feature type="domain" description="4Fe-4S ferredoxin-type 2" evidence="1">
    <location>
        <begin position="445"/>
        <end position="475"/>
    </location>
</feature>
<feature type="binding site" evidence="1">
    <location>
        <position position="73"/>
    </location>
    <ligand>
        <name>[4Fe-4S] cluster</name>
        <dbReference type="ChEBI" id="CHEBI:49883"/>
        <label>1</label>
        <note>ligand shared between dimeric partners</note>
    </ligand>
</feature>
<feature type="binding site" evidence="1">
    <location>
        <position position="76"/>
    </location>
    <ligand>
        <name>[4Fe-4S] cluster</name>
        <dbReference type="ChEBI" id="CHEBI:49883"/>
        <label>2</label>
    </ligand>
</feature>
<feature type="binding site" evidence="1">
    <location>
        <position position="77"/>
    </location>
    <ligand>
        <name>[4Fe-4S] cluster</name>
        <dbReference type="ChEBI" id="CHEBI:49883"/>
        <label>1</label>
        <note>ligand shared between dimeric partners</note>
    </ligand>
</feature>
<feature type="binding site" evidence="1">
    <location>
        <position position="79"/>
    </location>
    <ligand>
        <name>[4Fe-4S] cluster</name>
        <dbReference type="ChEBI" id="CHEBI:49883"/>
        <label>2</label>
    </ligand>
</feature>
<feature type="binding site" evidence="1">
    <location>
        <position position="84"/>
    </location>
    <ligand>
        <name>[4Fe-4S] cluster</name>
        <dbReference type="ChEBI" id="CHEBI:49883"/>
        <label>2</label>
    </ligand>
</feature>
<feature type="binding site" evidence="1">
    <location>
        <position position="94"/>
    </location>
    <ligand>
        <name>[4Fe-4S] cluster</name>
        <dbReference type="ChEBI" id="CHEBI:49883"/>
        <label>2</label>
    </ligand>
</feature>
<feature type="binding site" evidence="1">
    <location>
        <position position="117"/>
    </location>
    <ligand>
        <name>CO</name>
        <dbReference type="ChEBI" id="CHEBI:17245"/>
    </ligand>
</feature>
<feature type="binding site" evidence="1">
    <location>
        <position position="250"/>
    </location>
    <ligand>
        <name>[Ni-4Fe-4S] cluster</name>
        <dbReference type="ChEBI" id="CHEBI:47739"/>
    </ligand>
</feature>
<feature type="binding site" evidence="1">
    <location>
        <position position="278"/>
    </location>
    <ligand>
        <name>[Ni-4Fe-4S] cluster</name>
        <dbReference type="ChEBI" id="CHEBI:47739"/>
    </ligand>
</feature>
<feature type="binding site" evidence="1">
    <location>
        <position position="323"/>
    </location>
    <ligand>
        <name>[Ni-4Fe-4S] cluster</name>
        <dbReference type="ChEBI" id="CHEBI:47739"/>
    </ligand>
</feature>
<feature type="binding site" evidence="1">
    <location>
        <position position="417"/>
    </location>
    <ligand>
        <name>[4Fe-4S] cluster</name>
        <dbReference type="ChEBI" id="CHEBI:49883"/>
        <label>3</label>
    </ligand>
</feature>
<feature type="binding site" evidence="1">
    <location>
        <position position="420"/>
    </location>
    <ligand>
        <name>[4Fe-4S] cluster</name>
        <dbReference type="ChEBI" id="CHEBI:49883"/>
        <label>3</label>
    </ligand>
</feature>
<feature type="binding site" evidence="1">
    <location>
        <position position="423"/>
    </location>
    <ligand>
        <name>[4Fe-4S] cluster</name>
        <dbReference type="ChEBI" id="CHEBI:49883"/>
        <label>3</label>
    </ligand>
</feature>
<feature type="binding site" evidence="1">
    <location>
        <position position="427"/>
    </location>
    <ligand>
        <name>[4Fe-4S] cluster</name>
        <dbReference type="ChEBI" id="CHEBI:49883"/>
        <label>4</label>
    </ligand>
</feature>
<feature type="binding site" evidence="1">
    <location>
        <position position="455"/>
    </location>
    <ligand>
        <name>[4Fe-4S] cluster</name>
        <dbReference type="ChEBI" id="CHEBI:49883"/>
        <label>4</label>
    </ligand>
</feature>
<feature type="binding site" evidence="1">
    <location>
        <position position="458"/>
    </location>
    <ligand>
        <name>[4Fe-4S] cluster</name>
        <dbReference type="ChEBI" id="CHEBI:49883"/>
        <label>4</label>
    </ligand>
</feature>
<feature type="binding site" evidence="1">
    <location>
        <position position="461"/>
    </location>
    <ligand>
        <name>[4Fe-4S] cluster</name>
        <dbReference type="ChEBI" id="CHEBI:49883"/>
        <label>4</label>
    </ligand>
</feature>
<feature type="binding site" evidence="1">
    <location>
        <position position="465"/>
    </location>
    <ligand>
        <name>[4Fe-4S] cluster</name>
        <dbReference type="ChEBI" id="CHEBI:49883"/>
        <label>3</label>
    </ligand>
</feature>
<feature type="binding site" evidence="1">
    <location>
        <position position="523"/>
    </location>
    <ligand>
        <name>[Ni-4Fe-4S] cluster</name>
        <dbReference type="ChEBI" id="CHEBI:47739"/>
    </ligand>
</feature>
<feature type="binding site" evidence="1">
    <location>
        <position position="552"/>
    </location>
    <ligand>
        <name>[Ni-4Fe-4S] cluster</name>
        <dbReference type="ChEBI" id="CHEBI:47739"/>
    </ligand>
</feature>
<feature type="binding site" evidence="1">
    <location>
        <position position="587"/>
    </location>
    <ligand>
        <name>[Ni-4Fe-4S] cluster</name>
        <dbReference type="ChEBI" id="CHEBI:47739"/>
    </ligand>
</feature>
<keyword id="KW-0004">4Fe-4S</keyword>
<keyword id="KW-0903">Direct protein sequencing</keyword>
<keyword id="KW-0408">Iron</keyword>
<keyword id="KW-0411">Iron-sulfur</keyword>
<keyword id="KW-0479">Metal-binding</keyword>
<keyword id="KW-0484">Methanogenesis</keyword>
<keyword id="KW-0533">Nickel</keyword>
<keyword id="KW-0560">Oxidoreductase</keyword>
<keyword id="KW-0677">Repeat</keyword>
<sequence length="806" mass="88538">MSKLTTGSFSIEDLESVQITINNVIGAAKEAADEKAKDLGPMGPSAWPGLATYRDDWNLKLLDRYEPVITPMCDQCCYCTYGPCDLSNNKRGACGIDMLGHNGREFFLRVITGTACHAAHGRHLLDHLIEVFGEDLPLKLGQSDVLTPNITITTGQRPMTLGEIKPAMEHTEEQLTQLLATVHAGQESAEIDYDSKALFSGSLDHVGMEISDIVQIAALDFPKADPEAPLIEMGVGTIDKEKPFLCVIGHNVGGVTYMMDYMEEHDLTGKMELGGLCCTAIDLTRYKEADRRAPYTKVIGSMSQELKIIRSGLPDVIVVDEQCVRGDIVPEAQKLGIPVIASNAKIMYGLPNRDEQDVDATIEELKSGAIPGAVILDYDKLGEISVRLTQEMHPLREAAGLRKIASDEQMKEWVDKCADCGSCYLVCPEELEIPEAMKHAKEGDYSYLVDLHDQCIGCRRCEQVCKKEIPILSVIEKASQKVIAEEKGWMRAGRGQVSDAEIRAEGLNLVMGTTPGIIAIIGCPNYGDGAKSVYYIAEEFLKRNFIVVGTGCGAMDMGMYKDENGQTLYERFPGGFQSGGLVNIGSCVSNAHITGAAQKVAGIFGGRTMEGNLAEIADYVLNRVGACGLAWGAFSQKASSIGTGCNIYGIPAVLGPHSSKYRRALISKNYDDEKWKVYDARSGEEMAIPPAPEFLLITAETWQEAIPMMAKACIRPSDNSMGRSIKLTHWMELHQKYIGGMPEDWWKFIRTEADLPLAKRAELMKKLEEEHGWEIDWKRKKIISGPKIKFDVSAQPTNLKRLCKGA</sequence>
<reference key="1">
    <citation type="journal article" date="1996" name="J. Bacteriol.">
        <title>Analysis of the CO dehydrogenase/acetyl-Coenzyme A synthase operon of Methanosarcina thermophila.</title>
        <authorList>
            <person name="Maupin-Furlow J.A."/>
            <person name="Ferry J.G."/>
        </authorList>
    </citation>
    <scope>NUCLEOTIDE SEQUENCE [GENOMIC DNA]</scope>
    <scope>PROTEIN SEQUENCE OF 2-21</scope>
    <source>
        <strain>ATCC 43570 / DSM 1825 / OCM 12 / TM-1</strain>
    </source>
</reference>
<reference key="2">
    <citation type="journal article" date="1993" name="J. Biol. Chem.">
        <title>Transcriptional regulation of the carbon monoxide dehydrogenase gene (cdhA) in Methanosarcina thermophila.</title>
        <authorList>
            <person name="Sowers K.R."/>
            <person name="Thai T.T."/>
            <person name="Gunsalus R.P."/>
        </authorList>
    </citation>
    <scope>NUCLEOTIDE SEQUENCE [GENOMIC DNA] OF 1-107</scope>
    <scope>PROTEIN SEQUENCE OF 2-20</scope>
    <source>
        <strain>ATCC 43570 / DSM 1825 / OCM 12 / TM-1</strain>
    </source>
</reference>
<reference key="3">
    <citation type="journal article" date="1991" name="Proc. Natl. Acad. Sci. U.S.A.">
        <title>Resolution of component proteins in an enzyme complex from Methanosarcina thermophila catalyzing the synthesis or cleavage of acetyl-CoA.</title>
        <authorList>
            <person name="Abbanat D.R."/>
            <person name="Ferry J.G."/>
        </authorList>
    </citation>
    <scope>CHARACTERIZATION</scope>
</reference>
<comment type="function">
    <text evidence="1">Part of the ACDS complex that catalyzes the reversible cleavage of acetyl-CoA, allowing growth on acetate as sole source of carbon and energy. The alpha-epsilon subcomponent functions as a carbon monoxide dehydrogenase.</text>
</comment>
<comment type="catalytic activity">
    <reaction evidence="1">
        <text>CO + 2 oxidized [2Fe-2S]-[ferredoxin] + H2O = 2 reduced [2Fe-2S]-[ferredoxin] + CO2 + 2 H(+)</text>
        <dbReference type="Rhea" id="RHEA:21040"/>
        <dbReference type="Rhea" id="RHEA-COMP:10000"/>
        <dbReference type="Rhea" id="RHEA-COMP:10001"/>
        <dbReference type="ChEBI" id="CHEBI:15377"/>
        <dbReference type="ChEBI" id="CHEBI:15378"/>
        <dbReference type="ChEBI" id="CHEBI:16526"/>
        <dbReference type="ChEBI" id="CHEBI:17245"/>
        <dbReference type="ChEBI" id="CHEBI:33737"/>
        <dbReference type="ChEBI" id="CHEBI:33738"/>
        <dbReference type="EC" id="1.2.7.4"/>
    </reaction>
</comment>
<comment type="cofactor">
    <cofactor evidence="1">
        <name>[4Fe-4S] cluster</name>
        <dbReference type="ChEBI" id="CHEBI:49883"/>
    </cofactor>
    <text evidence="1">Binds 7 [4Fe-4S] clusters per heterotetramer.</text>
</comment>
<comment type="cofactor">
    <cofactor evidence="1">
        <name>[Ni-4Fe-4S] cluster</name>
        <dbReference type="ChEBI" id="CHEBI:47739"/>
    </cofactor>
    <text evidence="1">Binds 2 [Ni-4Fe-4S] clusters per heterotetramer.</text>
</comment>
<comment type="pathway">
    <text evidence="1">One-carbon metabolism; methanogenesis from acetate.</text>
</comment>
<comment type="subunit">
    <text evidence="1">Heterotetramer of two alpha and two epsilon subunits. The ACDS complex is made up of alpha, epsilon, beta, gamma and delta subunits with a probable stoichiometry of (alpha(2)epsilon(2))(4)-beta(8)-(gamma(1)delta(1))(8).</text>
</comment>
<comment type="domain">
    <text evidence="1">Cluster B is an all-cysteinyl-liganded 4Fe-4S cluster; cluster C is a mixed Ni-Fe-S cluster which is the active site of CO oxidation. Cluster D is also an all-cysteinyl-liganded 4Fe-4S cluster that bridges the two subunits of the CODH dimer. Contains two additional 4Fe-4S clusters, dubbed E and F, that probably transport electrons from ferredoxin to the B cluster.</text>
</comment>
<comment type="similarity">
    <text evidence="1">Belongs to the Ni-containing carbon monoxide dehydrogenase family.</text>
</comment>
<protein>
    <recommendedName>
        <fullName evidence="1">Acetyl-CoA decarbonylase/synthase complex subunit alpha 1</fullName>
        <shortName evidence="1">ACDS complex subunit alpha 1</shortName>
        <ecNumber evidence="1">1.2.7.4</ecNumber>
    </recommendedName>
    <alternativeName>
        <fullName evidence="1">ACDS complex carbon monoxide dehydrogenase subunit alpha 1</fullName>
        <shortName evidence="1">ACDS CODH subunit alpha 1</shortName>
    </alternativeName>
</protein>